<organism>
    <name type="scientific">Shewanella baltica (strain OS185)</name>
    <dbReference type="NCBI Taxonomy" id="402882"/>
    <lineage>
        <taxon>Bacteria</taxon>
        <taxon>Pseudomonadati</taxon>
        <taxon>Pseudomonadota</taxon>
        <taxon>Gammaproteobacteria</taxon>
        <taxon>Alteromonadales</taxon>
        <taxon>Shewanellaceae</taxon>
        <taxon>Shewanella</taxon>
    </lineage>
</organism>
<sequence>MKFIVKLYPEIMMKSKPVRMRFTKMLETNIRNVLKKVDEDAKVQRQWDRIMVMVPKDKPELAQAFGERLACIPGIAHVVQVDEYSFESVDDIYQQVLPVYRDQLAGKTFCVRVKRTGDHDFNSIEVERYVGGGLNQFTDALGVRLKNPDITVNLEIERDNLYMVTKRIEGLGGFPMATQEDVLSLISGGFDSGVSSYQFIKKGARTHYCFFNLGGAQHEIGVKQVAYHLWKTYGESHKVKFISVPFEPVVAEILERIDNGQMGVVLKRMMMRTAARIADRMGIQALVTGESLGQVSSQTLTNLNVIDRCTELLILRPLIAMDKQDIINESRKIGTEDFAKSMPEYCGVISQKPTVKAVLAKVEAEEKKFSEDLIDQIIAQSVTIDIREIAEQMDTRITETETVASIDTNQVVIDIRAPEEEESKPLQIEGIEIKRIPFFKLATQFADLDKQKTYLLYCERGVMSKLQALYLIEQGYTNVKVYRP</sequence>
<evidence type="ECO:0000255" key="1">
    <source>
        <dbReference type="HAMAP-Rule" id="MF_00021"/>
    </source>
</evidence>
<accession>A6WL09</accession>
<gene>
    <name evidence="1" type="primary">thiI</name>
    <name type="ordered locus">Shew185_1348</name>
</gene>
<feature type="chain" id="PRO_1000074264" description="tRNA sulfurtransferase">
    <location>
        <begin position="1"/>
        <end position="484"/>
    </location>
</feature>
<feature type="domain" description="THUMP" evidence="1">
    <location>
        <begin position="63"/>
        <end position="167"/>
    </location>
</feature>
<feature type="domain" description="Rhodanese" evidence="1">
    <location>
        <begin position="406"/>
        <end position="484"/>
    </location>
</feature>
<feature type="active site" description="Cysteine persulfide intermediate" evidence="1">
    <location>
        <position position="458"/>
    </location>
</feature>
<feature type="binding site" evidence="1">
    <location>
        <begin position="185"/>
        <end position="186"/>
    </location>
    <ligand>
        <name>ATP</name>
        <dbReference type="ChEBI" id="CHEBI:30616"/>
    </ligand>
</feature>
<feature type="binding site" evidence="1">
    <location>
        <position position="267"/>
    </location>
    <ligand>
        <name>ATP</name>
        <dbReference type="ChEBI" id="CHEBI:30616"/>
    </ligand>
</feature>
<feature type="binding site" evidence="1">
    <location>
        <position position="289"/>
    </location>
    <ligand>
        <name>ATP</name>
        <dbReference type="ChEBI" id="CHEBI:30616"/>
    </ligand>
</feature>
<feature type="binding site" evidence="1">
    <location>
        <position position="298"/>
    </location>
    <ligand>
        <name>ATP</name>
        <dbReference type="ChEBI" id="CHEBI:30616"/>
    </ligand>
</feature>
<feature type="disulfide bond" description="Redox-active" evidence="1">
    <location>
        <begin position="346"/>
        <end position="458"/>
    </location>
</feature>
<dbReference type="EC" id="2.8.1.4" evidence="1"/>
<dbReference type="EMBL" id="CP000753">
    <property type="protein sequence ID" value="ABS07498.1"/>
    <property type="molecule type" value="Genomic_DNA"/>
</dbReference>
<dbReference type="RefSeq" id="WP_006080887.1">
    <property type="nucleotide sequence ID" value="NC_009665.1"/>
</dbReference>
<dbReference type="SMR" id="A6WL09"/>
<dbReference type="GeneID" id="11771642"/>
<dbReference type="KEGG" id="sbm:Shew185_1348"/>
<dbReference type="HOGENOM" id="CLU_037952_4_1_6"/>
<dbReference type="UniPathway" id="UPA00060"/>
<dbReference type="GO" id="GO:0005829">
    <property type="term" value="C:cytosol"/>
    <property type="evidence" value="ECO:0007669"/>
    <property type="project" value="TreeGrafter"/>
</dbReference>
<dbReference type="GO" id="GO:0005524">
    <property type="term" value="F:ATP binding"/>
    <property type="evidence" value="ECO:0007669"/>
    <property type="project" value="UniProtKB-UniRule"/>
</dbReference>
<dbReference type="GO" id="GO:0004810">
    <property type="term" value="F:CCA tRNA nucleotidyltransferase activity"/>
    <property type="evidence" value="ECO:0007669"/>
    <property type="project" value="InterPro"/>
</dbReference>
<dbReference type="GO" id="GO:0000049">
    <property type="term" value="F:tRNA binding"/>
    <property type="evidence" value="ECO:0007669"/>
    <property type="project" value="UniProtKB-UniRule"/>
</dbReference>
<dbReference type="GO" id="GO:0140741">
    <property type="term" value="F:tRNA-uracil-4 sulfurtransferase activity"/>
    <property type="evidence" value="ECO:0007669"/>
    <property type="project" value="UniProtKB-EC"/>
</dbReference>
<dbReference type="GO" id="GO:0009228">
    <property type="term" value="P:thiamine biosynthetic process"/>
    <property type="evidence" value="ECO:0007669"/>
    <property type="project" value="UniProtKB-KW"/>
</dbReference>
<dbReference type="GO" id="GO:0009229">
    <property type="term" value="P:thiamine diphosphate biosynthetic process"/>
    <property type="evidence" value="ECO:0007669"/>
    <property type="project" value="UniProtKB-UniRule"/>
</dbReference>
<dbReference type="GO" id="GO:0052837">
    <property type="term" value="P:thiazole biosynthetic process"/>
    <property type="evidence" value="ECO:0007669"/>
    <property type="project" value="InterPro"/>
</dbReference>
<dbReference type="GO" id="GO:0002937">
    <property type="term" value="P:tRNA 4-thiouridine biosynthesis"/>
    <property type="evidence" value="ECO:0007669"/>
    <property type="project" value="TreeGrafter"/>
</dbReference>
<dbReference type="CDD" id="cd01712">
    <property type="entry name" value="PPase_ThiI"/>
    <property type="match status" value="1"/>
</dbReference>
<dbReference type="CDD" id="cd00158">
    <property type="entry name" value="RHOD"/>
    <property type="match status" value="1"/>
</dbReference>
<dbReference type="CDD" id="cd11716">
    <property type="entry name" value="THUMP_ThiI"/>
    <property type="match status" value="1"/>
</dbReference>
<dbReference type="FunFam" id="3.30.2130.30:FF:000002">
    <property type="entry name" value="tRNA sulfurtransferase"/>
    <property type="match status" value="1"/>
</dbReference>
<dbReference type="FunFam" id="3.40.250.10:FF:000003">
    <property type="entry name" value="tRNA sulfurtransferase"/>
    <property type="match status" value="1"/>
</dbReference>
<dbReference type="FunFam" id="3.40.50.620:FF:000029">
    <property type="entry name" value="tRNA sulfurtransferase"/>
    <property type="match status" value="1"/>
</dbReference>
<dbReference type="Gene3D" id="3.30.2130.30">
    <property type="match status" value="1"/>
</dbReference>
<dbReference type="Gene3D" id="3.40.50.620">
    <property type="entry name" value="HUPs"/>
    <property type="match status" value="1"/>
</dbReference>
<dbReference type="Gene3D" id="3.40.250.10">
    <property type="entry name" value="Rhodanese-like domain"/>
    <property type="match status" value="1"/>
</dbReference>
<dbReference type="HAMAP" id="MF_00021">
    <property type="entry name" value="ThiI"/>
    <property type="match status" value="1"/>
</dbReference>
<dbReference type="InterPro" id="IPR001763">
    <property type="entry name" value="Rhodanese-like_dom"/>
</dbReference>
<dbReference type="InterPro" id="IPR036873">
    <property type="entry name" value="Rhodanese-like_dom_sf"/>
</dbReference>
<dbReference type="InterPro" id="IPR014729">
    <property type="entry name" value="Rossmann-like_a/b/a_fold"/>
</dbReference>
<dbReference type="InterPro" id="IPR020536">
    <property type="entry name" value="ThiI_AANH"/>
</dbReference>
<dbReference type="InterPro" id="IPR054173">
    <property type="entry name" value="ThiI_fer"/>
</dbReference>
<dbReference type="InterPro" id="IPR049961">
    <property type="entry name" value="ThiI_N"/>
</dbReference>
<dbReference type="InterPro" id="IPR026340">
    <property type="entry name" value="THII_Thiazole_biosynth_dom"/>
</dbReference>
<dbReference type="InterPro" id="IPR004114">
    <property type="entry name" value="THUMP_dom"/>
</dbReference>
<dbReference type="InterPro" id="IPR049962">
    <property type="entry name" value="THUMP_ThiI"/>
</dbReference>
<dbReference type="InterPro" id="IPR003720">
    <property type="entry name" value="tRNA_STrfase"/>
</dbReference>
<dbReference type="InterPro" id="IPR050102">
    <property type="entry name" value="tRNA_sulfurtransferase_ThiI"/>
</dbReference>
<dbReference type="NCBIfam" id="TIGR04271">
    <property type="entry name" value="ThiI_C_thiazole"/>
    <property type="match status" value="1"/>
</dbReference>
<dbReference type="NCBIfam" id="TIGR00342">
    <property type="entry name" value="tRNA uracil 4-sulfurtransferase ThiI"/>
    <property type="match status" value="1"/>
</dbReference>
<dbReference type="PANTHER" id="PTHR43209">
    <property type="entry name" value="TRNA SULFURTRANSFERASE"/>
    <property type="match status" value="1"/>
</dbReference>
<dbReference type="PANTHER" id="PTHR43209:SF1">
    <property type="entry name" value="TRNA SULFURTRANSFERASE"/>
    <property type="match status" value="1"/>
</dbReference>
<dbReference type="Pfam" id="PF00581">
    <property type="entry name" value="Rhodanese"/>
    <property type="match status" value="1"/>
</dbReference>
<dbReference type="Pfam" id="PF02568">
    <property type="entry name" value="ThiI"/>
    <property type="match status" value="1"/>
</dbReference>
<dbReference type="Pfam" id="PF22025">
    <property type="entry name" value="ThiI_fer"/>
    <property type="match status" value="1"/>
</dbReference>
<dbReference type="Pfam" id="PF02926">
    <property type="entry name" value="THUMP"/>
    <property type="match status" value="1"/>
</dbReference>
<dbReference type="SMART" id="SM00981">
    <property type="entry name" value="THUMP"/>
    <property type="match status" value="1"/>
</dbReference>
<dbReference type="SUPFAM" id="SSF52402">
    <property type="entry name" value="Adenine nucleotide alpha hydrolases-like"/>
    <property type="match status" value="1"/>
</dbReference>
<dbReference type="SUPFAM" id="SSF52821">
    <property type="entry name" value="Rhodanese/Cell cycle control phosphatase"/>
    <property type="match status" value="1"/>
</dbReference>
<dbReference type="SUPFAM" id="SSF143437">
    <property type="entry name" value="THUMP domain-like"/>
    <property type="match status" value="1"/>
</dbReference>
<dbReference type="PROSITE" id="PS50206">
    <property type="entry name" value="RHODANESE_3"/>
    <property type="match status" value="1"/>
</dbReference>
<dbReference type="PROSITE" id="PS51165">
    <property type="entry name" value="THUMP"/>
    <property type="match status" value="1"/>
</dbReference>
<name>THII_SHEB8</name>
<reference key="1">
    <citation type="submission" date="2007-07" db="EMBL/GenBank/DDBJ databases">
        <title>Complete sequence of chromosome of Shewanella baltica OS185.</title>
        <authorList>
            <consortium name="US DOE Joint Genome Institute"/>
            <person name="Copeland A."/>
            <person name="Lucas S."/>
            <person name="Lapidus A."/>
            <person name="Barry K."/>
            <person name="Glavina del Rio T."/>
            <person name="Dalin E."/>
            <person name="Tice H."/>
            <person name="Pitluck S."/>
            <person name="Sims D."/>
            <person name="Brettin T."/>
            <person name="Bruce D."/>
            <person name="Detter J.C."/>
            <person name="Han C."/>
            <person name="Schmutz J."/>
            <person name="Larimer F."/>
            <person name="Land M."/>
            <person name="Hauser L."/>
            <person name="Kyrpides N."/>
            <person name="Mikhailova N."/>
            <person name="Brettar I."/>
            <person name="Rodrigues J."/>
            <person name="Konstantinidis K."/>
            <person name="Tiedje J."/>
            <person name="Richardson P."/>
        </authorList>
    </citation>
    <scope>NUCLEOTIDE SEQUENCE [LARGE SCALE GENOMIC DNA]</scope>
    <source>
        <strain>OS185</strain>
    </source>
</reference>
<protein>
    <recommendedName>
        <fullName evidence="1">tRNA sulfurtransferase</fullName>
        <ecNumber evidence="1">2.8.1.4</ecNumber>
    </recommendedName>
    <alternativeName>
        <fullName evidence="1">Sulfur carrier protein ThiS sulfurtransferase</fullName>
    </alternativeName>
    <alternativeName>
        <fullName evidence="1">Thiamine biosynthesis protein ThiI</fullName>
    </alternativeName>
    <alternativeName>
        <fullName evidence="1">tRNA 4-thiouridine synthase</fullName>
    </alternativeName>
</protein>
<keyword id="KW-0067">ATP-binding</keyword>
<keyword id="KW-0963">Cytoplasm</keyword>
<keyword id="KW-1015">Disulfide bond</keyword>
<keyword id="KW-0547">Nucleotide-binding</keyword>
<keyword id="KW-0676">Redox-active center</keyword>
<keyword id="KW-0694">RNA-binding</keyword>
<keyword id="KW-0784">Thiamine biosynthesis</keyword>
<keyword id="KW-0808">Transferase</keyword>
<keyword id="KW-0820">tRNA-binding</keyword>
<proteinExistence type="inferred from homology"/>
<comment type="function">
    <text evidence="1">Catalyzes the ATP-dependent transfer of a sulfur to tRNA to produce 4-thiouridine in position 8 of tRNAs, which functions as a near-UV photosensor. Also catalyzes the transfer of sulfur to the sulfur carrier protein ThiS, forming ThiS-thiocarboxylate. This is a step in the synthesis of thiazole, in the thiamine biosynthesis pathway. The sulfur is donated as persulfide by IscS.</text>
</comment>
<comment type="catalytic activity">
    <reaction evidence="1">
        <text>[ThiI sulfur-carrier protein]-S-sulfanyl-L-cysteine + a uridine in tRNA + 2 reduced [2Fe-2S]-[ferredoxin] + ATP + H(+) = [ThiI sulfur-carrier protein]-L-cysteine + a 4-thiouridine in tRNA + 2 oxidized [2Fe-2S]-[ferredoxin] + AMP + diphosphate</text>
        <dbReference type="Rhea" id="RHEA:24176"/>
        <dbReference type="Rhea" id="RHEA-COMP:10000"/>
        <dbReference type="Rhea" id="RHEA-COMP:10001"/>
        <dbReference type="Rhea" id="RHEA-COMP:13337"/>
        <dbReference type="Rhea" id="RHEA-COMP:13338"/>
        <dbReference type="Rhea" id="RHEA-COMP:13339"/>
        <dbReference type="Rhea" id="RHEA-COMP:13340"/>
        <dbReference type="ChEBI" id="CHEBI:15378"/>
        <dbReference type="ChEBI" id="CHEBI:29950"/>
        <dbReference type="ChEBI" id="CHEBI:30616"/>
        <dbReference type="ChEBI" id="CHEBI:33019"/>
        <dbReference type="ChEBI" id="CHEBI:33737"/>
        <dbReference type="ChEBI" id="CHEBI:33738"/>
        <dbReference type="ChEBI" id="CHEBI:61963"/>
        <dbReference type="ChEBI" id="CHEBI:65315"/>
        <dbReference type="ChEBI" id="CHEBI:136798"/>
        <dbReference type="ChEBI" id="CHEBI:456215"/>
        <dbReference type="EC" id="2.8.1.4"/>
    </reaction>
</comment>
<comment type="catalytic activity">
    <reaction evidence="1">
        <text>[ThiS sulfur-carrier protein]-C-terminal Gly-Gly-AMP + S-sulfanyl-L-cysteinyl-[cysteine desulfurase] + AH2 = [ThiS sulfur-carrier protein]-C-terminal-Gly-aminoethanethioate + L-cysteinyl-[cysteine desulfurase] + A + AMP + 2 H(+)</text>
        <dbReference type="Rhea" id="RHEA:43340"/>
        <dbReference type="Rhea" id="RHEA-COMP:12157"/>
        <dbReference type="Rhea" id="RHEA-COMP:12158"/>
        <dbReference type="Rhea" id="RHEA-COMP:12910"/>
        <dbReference type="Rhea" id="RHEA-COMP:19908"/>
        <dbReference type="ChEBI" id="CHEBI:13193"/>
        <dbReference type="ChEBI" id="CHEBI:15378"/>
        <dbReference type="ChEBI" id="CHEBI:17499"/>
        <dbReference type="ChEBI" id="CHEBI:29950"/>
        <dbReference type="ChEBI" id="CHEBI:61963"/>
        <dbReference type="ChEBI" id="CHEBI:90618"/>
        <dbReference type="ChEBI" id="CHEBI:232372"/>
        <dbReference type="ChEBI" id="CHEBI:456215"/>
    </reaction>
</comment>
<comment type="pathway">
    <text evidence="1">Cofactor biosynthesis; thiamine diphosphate biosynthesis.</text>
</comment>
<comment type="subcellular location">
    <subcellularLocation>
        <location evidence="1">Cytoplasm</location>
    </subcellularLocation>
</comment>
<comment type="similarity">
    <text evidence="1">Belongs to the ThiI family.</text>
</comment>